<gene>
    <name type="ordered locus">BRA1187</name>
    <name type="ordered locus">BS1330_II1178</name>
</gene>
<keyword id="KW-0067">ATP-binding</keyword>
<keyword id="KW-0997">Cell inner membrane</keyword>
<keyword id="KW-1003">Cell membrane</keyword>
<keyword id="KW-0472">Membrane</keyword>
<keyword id="KW-0547">Nucleotide-binding</keyword>
<keyword id="KW-1278">Translocase</keyword>
<keyword id="KW-0813">Transport</keyword>
<protein>
    <recommendedName>
        <fullName>Putative ATP-binding protein BRA1187/BS1330_II1178</fullName>
        <ecNumber>7.-.-.-</ecNumber>
    </recommendedName>
</protein>
<proteinExistence type="inferred from homology"/>
<reference key="1">
    <citation type="journal article" date="2002" name="Proc. Natl. Acad. Sci. U.S.A.">
        <title>The Brucella suis genome reveals fundamental similarities between animal and plant pathogens and symbionts.</title>
        <authorList>
            <person name="Paulsen I.T."/>
            <person name="Seshadri R."/>
            <person name="Nelson K.E."/>
            <person name="Eisen J.A."/>
            <person name="Heidelberg J.F."/>
            <person name="Read T.D."/>
            <person name="Dodson R.J."/>
            <person name="Umayam L.A."/>
            <person name="Brinkac L.M."/>
            <person name="Beanan M.J."/>
            <person name="Daugherty S.C."/>
            <person name="DeBoy R.T."/>
            <person name="Durkin A.S."/>
            <person name="Kolonay J.F."/>
            <person name="Madupu R."/>
            <person name="Nelson W.C."/>
            <person name="Ayodeji B."/>
            <person name="Kraul M."/>
            <person name="Shetty J."/>
            <person name="Malek J.A."/>
            <person name="Van Aken S.E."/>
            <person name="Riedmuller S."/>
            <person name="Tettelin H."/>
            <person name="Gill S.R."/>
            <person name="White O."/>
            <person name="Salzberg S.L."/>
            <person name="Hoover D.L."/>
            <person name="Lindler L.E."/>
            <person name="Halling S.M."/>
            <person name="Boyle S.M."/>
            <person name="Fraser C.M."/>
        </authorList>
    </citation>
    <scope>NUCLEOTIDE SEQUENCE [LARGE SCALE GENOMIC DNA]</scope>
    <source>
        <strain>1330</strain>
    </source>
</reference>
<reference key="2">
    <citation type="journal article" date="2011" name="J. Bacteriol.">
        <title>Revised genome sequence of Brucella suis 1330.</title>
        <authorList>
            <person name="Tae H."/>
            <person name="Shallom S."/>
            <person name="Settlage R."/>
            <person name="Preston D."/>
            <person name="Adams L.G."/>
            <person name="Garner H.R."/>
        </authorList>
    </citation>
    <scope>NUCLEOTIDE SEQUENCE [LARGE SCALE GENOMIC DNA]</scope>
    <source>
        <strain>1330</strain>
    </source>
</reference>
<name>Y4187_BRUSU</name>
<sequence length="260" mass="28684">MKPKISFNNVVMRYGGFLALDRLNLDIADGEFVTVVGPSGCGKSTAMNIAAGLLQPSGGEILVGDKPVTGPGPERGVIFQQYALFPWLTVRQNVEFGLSVAGMSRVKRREISDHYLSLVGLTDFADALPKALSGGMKQRCAIARAYAAAPEILLMDEPFGALDALTRVHMQDQLLDAWSRERRTVMFITHDVDEAVYLANRVIVMAARPGRLDQIIPVDLPYPRTEAIRLSPEFAAIRNRVWHAVYHQQPQTDQQSSHGQ</sequence>
<feature type="chain" id="PRO_0000284109" description="Putative ATP-binding protein BRA1187/BS1330_II1178">
    <location>
        <begin position="1"/>
        <end position="260"/>
    </location>
</feature>
<feature type="domain" description="ABC transporter" evidence="1">
    <location>
        <begin position="5"/>
        <end position="228"/>
    </location>
</feature>
<feature type="binding site" evidence="1">
    <location>
        <begin position="37"/>
        <end position="44"/>
    </location>
    <ligand>
        <name>ATP</name>
        <dbReference type="ChEBI" id="CHEBI:30616"/>
    </ligand>
</feature>
<comment type="function">
    <text evidence="2">Probably part of an ABC transporter complex. Probably Responsible for energy coupling to the transport system (Probable).</text>
</comment>
<comment type="subunit">
    <text evidence="2">The complex is composed of two ATP-binding proteins (BRA1187), two transmembrane proteins (BRA1188) and a solute-binding protein (BRA1186).</text>
</comment>
<comment type="subcellular location">
    <subcellularLocation>
        <location evidence="2">Cell inner membrane</location>
        <topology evidence="2">Peripheral membrane protein</topology>
    </subcellularLocation>
</comment>
<comment type="similarity">
    <text evidence="2">Belongs to the ABC transporter superfamily.</text>
</comment>
<organism>
    <name type="scientific">Brucella suis biovar 1 (strain 1330)</name>
    <dbReference type="NCBI Taxonomy" id="204722"/>
    <lineage>
        <taxon>Bacteria</taxon>
        <taxon>Pseudomonadati</taxon>
        <taxon>Pseudomonadota</taxon>
        <taxon>Alphaproteobacteria</taxon>
        <taxon>Hyphomicrobiales</taxon>
        <taxon>Brucellaceae</taxon>
        <taxon>Brucella/Ochrobactrum group</taxon>
        <taxon>Brucella</taxon>
    </lineage>
</organism>
<accession>Q8FUN3</accession>
<accession>G0KEI3</accession>
<evidence type="ECO:0000255" key="1">
    <source>
        <dbReference type="PROSITE-ProRule" id="PRU00434"/>
    </source>
</evidence>
<evidence type="ECO:0000305" key="2"/>
<dbReference type="EC" id="7.-.-.-"/>
<dbReference type="EMBL" id="AE014292">
    <property type="protein sequence ID" value="AAN34345.1"/>
    <property type="molecule type" value="Genomic_DNA"/>
</dbReference>
<dbReference type="EMBL" id="CP002998">
    <property type="protein sequence ID" value="AEM20621.1"/>
    <property type="molecule type" value="Genomic_DNA"/>
</dbReference>
<dbReference type="RefSeq" id="WP_002966594.1">
    <property type="nucleotide sequence ID" value="NZ_KN046805.1"/>
</dbReference>
<dbReference type="SMR" id="Q8FUN3"/>
<dbReference type="KEGG" id="bms:BRA1187"/>
<dbReference type="KEGG" id="bsi:BS1330_II1178"/>
<dbReference type="PATRIC" id="fig|204722.22.peg.2780"/>
<dbReference type="HOGENOM" id="CLU_000604_1_22_5"/>
<dbReference type="PhylomeDB" id="Q8FUN3"/>
<dbReference type="Proteomes" id="UP000007104">
    <property type="component" value="Chromosome II"/>
</dbReference>
<dbReference type="GO" id="GO:0005886">
    <property type="term" value="C:plasma membrane"/>
    <property type="evidence" value="ECO:0007669"/>
    <property type="project" value="UniProtKB-SubCell"/>
</dbReference>
<dbReference type="GO" id="GO:0005524">
    <property type="term" value="F:ATP binding"/>
    <property type="evidence" value="ECO:0007669"/>
    <property type="project" value="UniProtKB-KW"/>
</dbReference>
<dbReference type="GO" id="GO:0016887">
    <property type="term" value="F:ATP hydrolysis activity"/>
    <property type="evidence" value="ECO:0007669"/>
    <property type="project" value="InterPro"/>
</dbReference>
<dbReference type="CDD" id="cd03293">
    <property type="entry name" value="ABC_NrtD_SsuB_transporters"/>
    <property type="match status" value="1"/>
</dbReference>
<dbReference type="Gene3D" id="3.40.50.300">
    <property type="entry name" value="P-loop containing nucleotide triphosphate hydrolases"/>
    <property type="match status" value="1"/>
</dbReference>
<dbReference type="InterPro" id="IPR003593">
    <property type="entry name" value="AAA+_ATPase"/>
</dbReference>
<dbReference type="InterPro" id="IPR003439">
    <property type="entry name" value="ABC_transporter-like_ATP-bd"/>
</dbReference>
<dbReference type="InterPro" id="IPR050166">
    <property type="entry name" value="ABC_transporter_ATP-bind"/>
</dbReference>
<dbReference type="InterPro" id="IPR027417">
    <property type="entry name" value="P-loop_NTPase"/>
</dbReference>
<dbReference type="PANTHER" id="PTHR42788:SF13">
    <property type="entry name" value="ALIPHATIC SULFONATES IMPORT ATP-BINDING PROTEIN SSUB"/>
    <property type="match status" value="1"/>
</dbReference>
<dbReference type="PANTHER" id="PTHR42788">
    <property type="entry name" value="TAURINE IMPORT ATP-BINDING PROTEIN-RELATED"/>
    <property type="match status" value="1"/>
</dbReference>
<dbReference type="Pfam" id="PF00005">
    <property type="entry name" value="ABC_tran"/>
    <property type="match status" value="1"/>
</dbReference>
<dbReference type="SMART" id="SM00382">
    <property type="entry name" value="AAA"/>
    <property type="match status" value="1"/>
</dbReference>
<dbReference type="SUPFAM" id="SSF52540">
    <property type="entry name" value="P-loop containing nucleoside triphosphate hydrolases"/>
    <property type="match status" value="1"/>
</dbReference>
<dbReference type="PROSITE" id="PS50893">
    <property type="entry name" value="ABC_TRANSPORTER_2"/>
    <property type="match status" value="1"/>
</dbReference>